<reference key="1">
    <citation type="journal article" date="1998" name="Science">
        <title>Genome sequence of an obligate intracellular pathogen of humans: Chlamydia trachomatis.</title>
        <authorList>
            <person name="Stephens R.S."/>
            <person name="Kalman S."/>
            <person name="Lammel C.J."/>
            <person name="Fan J."/>
            <person name="Marathe R."/>
            <person name="Aravind L."/>
            <person name="Mitchell W.P."/>
            <person name="Olinger L."/>
            <person name="Tatusov R.L."/>
            <person name="Zhao Q."/>
            <person name="Koonin E.V."/>
            <person name="Davis R.W."/>
        </authorList>
    </citation>
    <scope>NUCLEOTIDE SEQUENCE [LARGE SCALE GENOMIC DNA]</scope>
    <source>
        <strain>ATCC VR-885 / DSM 19411 / UW-3/Cx</strain>
    </source>
</reference>
<feature type="chain" id="PRO_0000102647" description="Ribosome-binding factor A">
    <location>
        <begin position="1"/>
        <end position="123"/>
    </location>
</feature>
<accession>O84097</accession>
<sequence>MAENRRMKKVNAMLREAIAKVILKDVKHPKISNRWITITRVSLSRDLQSACVYVSIMPHENSQEETLAALKASAGFIAFQASKDLVLKYFPDLNFYVEDIFSPQDHIESLLLKIAEQDKKTNP</sequence>
<protein>
    <recommendedName>
        <fullName evidence="1">Ribosome-binding factor A</fullName>
    </recommendedName>
</protein>
<organism>
    <name type="scientific">Chlamydia trachomatis serovar D (strain ATCC VR-885 / DSM 19411 / UW-3/Cx)</name>
    <dbReference type="NCBI Taxonomy" id="272561"/>
    <lineage>
        <taxon>Bacteria</taxon>
        <taxon>Pseudomonadati</taxon>
        <taxon>Chlamydiota</taxon>
        <taxon>Chlamydiia</taxon>
        <taxon>Chlamydiales</taxon>
        <taxon>Chlamydiaceae</taxon>
        <taxon>Chlamydia/Chlamydophila group</taxon>
        <taxon>Chlamydia</taxon>
    </lineage>
</organism>
<gene>
    <name evidence="1" type="primary">rbfA</name>
    <name type="ordered locus">CT_095</name>
</gene>
<comment type="function">
    <text evidence="1">One of several proteins that assist in the late maturation steps of the functional core of the 30S ribosomal subunit. Associates with free 30S ribosomal subunits (but not with 30S subunits that are part of 70S ribosomes or polysomes). Required for efficient processing of 16S rRNA. May interact with the 5'-terminal helix region of 16S rRNA.</text>
</comment>
<comment type="subunit">
    <text evidence="1">Monomer. Binds 30S ribosomal subunits, but not 50S ribosomal subunits or 70S ribosomes.</text>
</comment>
<comment type="subcellular location">
    <subcellularLocation>
        <location evidence="1">Cytoplasm</location>
    </subcellularLocation>
</comment>
<comment type="similarity">
    <text evidence="1">Belongs to the RbfA family.</text>
</comment>
<name>RBFA_CHLTR</name>
<dbReference type="EMBL" id="AE001273">
    <property type="protein sequence ID" value="AAC67686.1"/>
    <property type="molecule type" value="Genomic_DNA"/>
</dbReference>
<dbReference type="PIR" id="G71558">
    <property type="entry name" value="G71558"/>
</dbReference>
<dbReference type="RefSeq" id="NP_219598.1">
    <property type="nucleotide sequence ID" value="NC_000117.1"/>
</dbReference>
<dbReference type="RefSeq" id="WP_009871443.1">
    <property type="nucleotide sequence ID" value="NC_000117.1"/>
</dbReference>
<dbReference type="SMR" id="O84097"/>
<dbReference type="FunCoup" id="O84097">
    <property type="interactions" value="234"/>
</dbReference>
<dbReference type="STRING" id="272561.CT_095"/>
<dbReference type="EnsemblBacteria" id="AAC67686">
    <property type="protein sequence ID" value="AAC67686"/>
    <property type="gene ID" value="CT_095"/>
</dbReference>
<dbReference type="GeneID" id="884166"/>
<dbReference type="KEGG" id="ctr:CT_095"/>
<dbReference type="PATRIC" id="fig|272561.5.peg.104"/>
<dbReference type="HOGENOM" id="CLU_089475_6_3_0"/>
<dbReference type="InParanoid" id="O84097"/>
<dbReference type="OrthoDB" id="21494at2"/>
<dbReference type="Proteomes" id="UP000000431">
    <property type="component" value="Chromosome"/>
</dbReference>
<dbReference type="GO" id="GO:0005829">
    <property type="term" value="C:cytosol"/>
    <property type="evidence" value="ECO:0000318"/>
    <property type="project" value="GO_Central"/>
</dbReference>
<dbReference type="GO" id="GO:0043024">
    <property type="term" value="F:ribosomal small subunit binding"/>
    <property type="evidence" value="ECO:0000318"/>
    <property type="project" value="GO_Central"/>
</dbReference>
<dbReference type="GO" id="GO:0030490">
    <property type="term" value="P:maturation of SSU-rRNA"/>
    <property type="evidence" value="ECO:0007669"/>
    <property type="project" value="UniProtKB-UniRule"/>
</dbReference>
<dbReference type="GO" id="GO:0042254">
    <property type="term" value="P:ribosome biogenesis"/>
    <property type="evidence" value="ECO:0000318"/>
    <property type="project" value="GO_Central"/>
</dbReference>
<dbReference type="FunFam" id="3.30.300.20:FF:000040">
    <property type="entry name" value="Ribosome-binding factor A"/>
    <property type="match status" value="1"/>
</dbReference>
<dbReference type="Gene3D" id="3.30.300.20">
    <property type="match status" value="1"/>
</dbReference>
<dbReference type="HAMAP" id="MF_00003">
    <property type="entry name" value="RbfA"/>
    <property type="match status" value="1"/>
</dbReference>
<dbReference type="InterPro" id="IPR015946">
    <property type="entry name" value="KH_dom-like_a/b"/>
</dbReference>
<dbReference type="InterPro" id="IPR000238">
    <property type="entry name" value="RbfA"/>
</dbReference>
<dbReference type="InterPro" id="IPR023799">
    <property type="entry name" value="RbfA_dom_sf"/>
</dbReference>
<dbReference type="NCBIfam" id="TIGR00082">
    <property type="entry name" value="rbfA"/>
    <property type="match status" value="1"/>
</dbReference>
<dbReference type="PANTHER" id="PTHR33515">
    <property type="entry name" value="RIBOSOME-BINDING FACTOR A, CHLOROPLASTIC-RELATED"/>
    <property type="match status" value="1"/>
</dbReference>
<dbReference type="PANTHER" id="PTHR33515:SF1">
    <property type="entry name" value="RIBOSOME-BINDING FACTOR A, CHLOROPLASTIC-RELATED"/>
    <property type="match status" value="1"/>
</dbReference>
<dbReference type="Pfam" id="PF02033">
    <property type="entry name" value="RBFA"/>
    <property type="match status" value="1"/>
</dbReference>
<dbReference type="SUPFAM" id="SSF89919">
    <property type="entry name" value="Ribosome-binding factor A, RbfA"/>
    <property type="match status" value="1"/>
</dbReference>
<keyword id="KW-0963">Cytoplasm</keyword>
<keyword id="KW-1185">Reference proteome</keyword>
<keyword id="KW-0690">Ribosome biogenesis</keyword>
<proteinExistence type="inferred from homology"/>
<evidence type="ECO:0000255" key="1">
    <source>
        <dbReference type="HAMAP-Rule" id="MF_00003"/>
    </source>
</evidence>